<feature type="chain" id="PRO_0000182677" description="Transcriptional activator GvpE">
    <location>
        <begin position="1"/>
        <end position="192"/>
    </location>
</feature>
<feature type="region of interest" description="Leucine-zipper" evidence="12">
    <location>
        <begin position="150"/>
        <end position="181"/>
    </location>
</feature>
<feature type="binding site" evidence="12">
    <location>
        <begin position="140"/>
        <end position="145"/>
    </location>
    <ligand>
        <name>DNA</name>
        <dbReference type="ChEBI" id="CHEBI:16991"/>
    </ligand>
</feature>
<protein>
    <recommendedName>
        <fullName evidence="7">Transcriptional activator GvpE</fullName>
    </recommendedName>
    <alternativeName>
        <fullName evidence="7">mc-GvpE</fullName>
    </alternativeName>
</protein>
<accession>Q02230</accession>
<accession>I3R594</accession>
<keyword id="KW-0010">Activator</keyword>
<keyword id="KW-0963">Cytoplasm</keyword>
<keyword id="KW-0238">DNA-binding</keyword>
<keyword id="KW-0804">Transcription</keyword>
<keyword id="KW-0805">Transcription regulation</keyword>
<organism>
    <name type="scientific">Haloferax mediterranei (strain ATCC 33500 / DSM 1411 / JCM 8866 / NBRC 14739 / NCIMB 2177 / R-4)</name>
    <name type="common">Halobacterium mediterranei</name>
    <dbReference type="NCBI Taxonomy" id="523841"/>
    <lineage>
        <taxon>Archaea</taxon>
        <taxon>Methanobacteriati</taxon>
        <taxon>Methanobacteriota</taxon>
        <taxon>Stenosarchaea group</taxon>
        <taxon>Halobacteria</taxon>
        <taxon>Halobacteriales</taxon>
        <taxon>Haloferacaceae</taxon>
        <taxon>Haloferax</taxon>
    </lineage>
</organism>
<sequence>MERLIEELRKEIKADTEMTFTVSDVDSLLTADFESKHTAHSERGNSSPQYTETPLTDDAVATMDGWLDESYLHTINDKDVVAQLDEILLLLIAIRDGACGKELLQDIRRLFGTDLSPGTVYPHLNDLADEGMLDMTELAKRKVYRISDAEATFDTVEPAVNRLVTFSLVLKALMIDCNARYLQTQRSESNER</sequence>
<reference key="1">
    <citation type="journal article" date="1992" name="J. Mol. Biol.">
        <title>Three different but related gene clusters encoding gas vesicles in halophilic archaea.</title>
        <authorList>
            <person name="Englert C."/>
            <person name="Krueger K."/>
            <person name="Offner S."/>
            <person name="Pfeifer F."/>
        </authorList>
    </citation>
    <scope>NUCLEOTIDE SEQUENCE [GENOMIC DNA]</scope>
    <scope>INDUCTION</scope>
    <scope>GAS VESICLE GENE CLUSTER</scope>
    <source>
        <strain>ATCC 33500 / DSM 1411 / JCM 8866 / NBRC 14739 / NCIMB 2177 / R-4</strain>
    </source>
</reference>
<reference key="2">
    <citation type="journal article" date="2012" name="J. Bacteriol.">
        <title>Complete genome sequence of the metabolically versatile halophilic archaeon Haloferax mediterranei, a poly(3-hydroxybutyrate-co-3-hydroxyvalerate) producer.</title>
        <authorList>
            <person name="Han J."/>
            <person name="Zhang F."/>
            <person name="Hou J."/>
            <person name="Liu X."/>
            <person name="Li M."/>
            <person name="Liu H."/>
            <person name="Cai L."/>
            <person name="Zhang B."/>
            <person name="Chen Y."/>
            <person name="Zhou J."/>
            <person name="Hu S."/>
            <person name="Xiang H."/>
        </authorList>
    </citation>
    <scope>NUCLEOTIDE SEQUENCE [LARGE SCALE GENOMIC DNA]</scope>
    <source>
        <strain>ATCC 33500 / DSM 1411 / JCM 8866 / NBRC 14739 / NCIMB 2177 / R-4</strain>
    </source>
</reference>
<reference key="3">
    <citation type="journal article" date="1996" name="Microbiology">
        <title>Influence of salt on the transcription of the gas-vesicle genes of Haloferax mediterranei and identification of the endogenous transcriptional activator gene.</title>
        <authorList>
            <person name="Roeder R."/>
            <person name="Pfeifer F."/>
        </authorList>
    </citation>
    <scope>PROBABLE FUNCTION AS A TRANSCRIPTIONAL REGULATOR</scope>
    <scope>INDUCTION BY SALT</scope>
    <source>
        <strain>ATCC 33500 / DSM 1411 / JCM 8866 / NBRC 14739 / NCIMB 2177 / R-4</strain>
    </source>
</reference>
<reference key="4">
    <citation type="journal article" date="1998" name="J. Mol. Biol.">
        <title>The transcriptional activator GvpE for the halobacterial gas vesicle genes resembles a basic region leucine-zipper regulatory protein.</title>
        <authorList>
            <person name="Krueger K."/>
            <person name="Hermann T."/>
            <person name="Armbruster V."/>
            <person name="Pfeifer F."/>
        </authorList>
    </citation>
    <scope>DISCUSSION OF SEQUENCE</scope>
</reference>
<reference key="5">
    <citation type="journal article" date="2003" name="Mol. Microbiol.">
        <title>Regulation of the expression of gas vesicle genes in Haloferax mediterranei: interaction of the two regulatory proteins GvpD and GvpE.</title>
        <authorList>
            <person name="Zimmermann P."/>
            <person name="Pfeifer F."/>
        </authorList>
    </citation>
    <scope>FUNCTION</scope>
    <scope>ACTIVITY REGULATION</scope>
    <scope>SUBUNIT</scope>
    <scope>INTERACTION WITH GVPD</scope>
    <scope>INDUCTION</scope>
</reference>
<reference key="6">
    <citation type="journal article" date="2007" name="Microbiology">
        <title>GvpD-induced breakdown of the transcriptional activator GvpE of halophilic archaea requires a functional p-loop and an arginine-rich region of GvpD.</title>
        <authorList>
            <person name="Scheuch S."/>
            <person name="Pfeifer F."/>
        </authorList>
    </citation>
    <scope>ACTIVITY REGULATION</scope>
    <scope>INTERACTION WITH GVPD</scope>
</reference>
<comment type="function">
    <text evidence="1 2 11">Plays a regulatory role in gas vesicle synthesis, activates transcription of the gvpA operon, and probably of the gvpD operon (Probable) (PubMed:12864859). Gas vesicles are hollow, gas filled proteinaceous nanostructures found in some microorganisms. They allow positioning of halobacteria at the optimal depth for growth in the poorly aerated, shallow brine pools of their habitat (By similarity).</text>
</comment>
<comment type="function">
    <text evidence="3 5">Expression of a 9.5 kb mc-vac DNA fragment containing 2 divergently transcribed regions (gvpD-gvpE-gvpF-gvpG-gvpH-gvpI-gvpJ-gvpK-gvpL-gvpM and gvpA-gvpC-gvpN-gvpO) allows H.volcanii to produce gas vesicles.</text>
</comment>
<comment type="activity regulation">
    <text evidence="4 9">The amount of protein that accumulates is controlled by GvpD; GvpD causes a reduction in the amount of GvpE, preventing accumulation of excessive amounts of gas vesicles.</text>
</comment>
<comment type="subunit">
    <text evidence="9 10">Interacts with GvpD, also with c-GvpD from H.salinarum.</text>
</comment>
<comment type="subcellular location">
    <subcellularLocation>
        <location evidence="8">Cytoplasm</location>
    </subcellularLocation>
    <text evidence="8">Probably not part of the mature gas vesicle.</text>
</comment>
<comment type="induction">
    <text evidence="2 3 5">Transcribed from mid-log to stationary phase, probably as a gvpD-gvpM RNA (PubMed:1404376). Highly expressed in 25% salt, poorly expressed in 15% salt, no gas vesicles are formed at 15% salt at 15% salt (PubMed:8757736). Accumulates in late exponential to stationary phase (at protein level) (PubMed:12864859).</text>
</comment>
<comment type="miscellaneous">
    <text evidence="3 5">Encoded in a 14-gene locus called mc-vac.</text>
</comment>
<name>GVPE_HALMT</name>
<gene>
    <name evidence="6" type="primary">gvpE</name>
    <name type="ordered locus">HFX_1698</name>
</gene>
<dbReference type="EMBL" id="X64701">
    <property type="protein sequence ID" value="CAA45947.1"/>
    <property type="molecule type" value="Genomic_DNA"/>
</dbReference>
<dbReference type="EMBL" id="CP001868">
    <property type="protein sequence ID" value="AFK19404.1"/>
    <property type="molecule type" value="Genomic_DNA"/>
</dbReference>
<dbReference type="PIR" id="S28118">
    <property type="entry name" value="S28118"/>
</dbReference>
<dbReference type="RefSeq" id="WP_004056704.1">
    <property type="nucleotide sequence ID" value="NC_017941.2"/>
</dbReference>
<dbReference type="SMR" id="Q02230"/>
<dbReference type="STRING" id="523841.HFX_1698"/>
<dbReference type="PaxDb" id="523841-HFX_1698"/>
<dbReference type="GeneID" id="40157053"/>
<dbReference type="KEGG" id="hme:HFX_1698"/>
<dbReference type="eggNOG" id="arCOG00008">
    <property type="taxonomic scope" value="Archaea"/>
</dbReference>
<dbReference type="HOGENOM" id="CLU_1418666_0_0_2"/>
<dbReference type="OrthoDB" id="56053at2157"/>
<dbReference type="Proteomes" id="UP000006469">
    <property type="component" value="Chromosome"/>
</dbReference>
<dbReference type="GO" id="GO:0005737">
    <property type="term" value="C:cytoplasm"/>
    <property type="evidence" value="ECO:0007669"/>
    <property type="project" value="UniProtKB-SubCell"/>
</dbReference>
<dbReference type="GO" id="GO:0003677">
    <property type="term" value="F:DNA binding"/>
    <property type="evidence" value="ECO:0007669"/>
    <property type="project" value="UniProtKB-KW"/>
</dbReference>
<dbReference type="CDD" id="cd00090">
    <property type="entry name" value="HTH_ARSR"/>
    <property type="match status" value="1"/>
</dbReference>
<dbReference type="Gene3D" id="1.10.10.10">
    <property type="entry name" value="Winged helix-like DNA-binding domain superfamily/Winged helix DNA-binding domain"/>
    <property type="match status" value="1"/>
</dbReference>
<dbReference type="InterPro" id="IPR011991">
    <property type="entry name" value="ArsR-like_HTH"/>
</dbReference>
<dbReference type="InterPro" id="IPR005149">
    <property type="entry name" value="Tscrpt_reg_PadR_N"/>
</dbReference>
<dbReference type="InterPro" id="IPR036388">
    <property type="entry name" value="WH-like_DNA-bd_sf"/>
</dbReference>
<dbReference type="InterPro" id="IPR036390">
    <property type="entry name" value="WH_DNA-bd_sf"/>
</dbReference>
<dbReference type="Pfam" id="PF03551">
    <property type="entry name" value="PadR"/>
    <property type="match status" value="1"/>
</dbReference>
<dbReference type="SUPFAM" id="SSF46785">
    <property type="entry name" value="Winged helix' DNA-binding domain"/>
    <property type="match status" value="1"/>
</dbReference>
<proteinExistence type="evidence at protein level"/>
<evidence type="ECO:0000250" key="1">
    <source>
        <dbReference type="UniProtKB" id="P13044"/>
    </source>
</evidence>
<evidence type="ECO:0000269" key="2">
    <source>
    </source>
</evidence>
<evidence type="ECO:0000269" key="3">
    <source>
    </source>
</evidence>
<evidence type="ECO:0000269" key="4">
    <source>
    </source>
</evidence>
<evidence type="ECO:0000269" key="5">
    <source>
    </source>
</evidence>
<evidence type="ECO:0000303" key="6">
    <source>
    </source>
</evidence>
<evidence type="ECO:0000303" key="7">
    <source>
    </source>
</evidence>
<evidence type="ECO:0000305" key="8"/>
<evidence type="ECO:0000305" key="9">
    <source>
    </source>
</evidence>
<evidence type="ECO:0000305" key="10">
    <source>
    </source>
</evidence>
<evidence type="ECO:0000305" key="11">
    <source>
    </source>
</evidence>
<evidence type="ECO:0000305" key="12">
    <source>
    </source>
</evidence>